<sequence>MPLTEHLRELRYRLIISIIAFLIGSGIAFYFAKYVFEILKEPILKSYPEVELITLSPTEPLFILIKISLAVGFIIASPVILYQFWRFIEPALYSHEKRAFIPLLLGSILLFMLGALFAYFIVLPLALKFLLGLGFTQLLATPYLSVDMYISFVLKLVVAFGIAFEMPIVLYVLQKAGVITPEQLASFRKYFIVIAFVIGAIIAPDVSTQVLMAIPLLLLYEISIFLGKLATRKKKEIQKA</sequence>
<protein>
    <recommendedName>
        <fullName evidence="1">Sec-independent protein translocase protein TatC</fullName>
    </recommendedName>
</protein>
<comment type="function">
    <text evidence="1">Part of the twin-arginine translocation (Tat) system that transports large folded proteins containing a characteristic twin-arginine motif in their signal peptide across membranes.</text>
</comment>
<comment type="subunit">
    <text evidence="1">Forms a complex with TatA.</text>
</comment>
<comment type="subcellular location">
    <subcellularLocation>
        <location evidence="1">Cell inner membrane</location>
        <topology evidence="1">Multi-pass membrane protein</topology>
    </subcellularLocation>
</comment>
<comment type="similarity">
    <text evidence="1">Belongs to the TatC family.</text>
</comment>
<proteinExistence type="evidence at protein level"/>
<organism>
    <name type="scientific">Aquifex aeolicus (strain VF5)</name>
    <dbReference type="NCBI Taxonomy" id="224324"/>
    <lineage>
        <taxon>Bacteria</taxon>
        <taxon>Pseudomonadati</taxon>
        <taxon>Aquificota</taxon>
        <taxon>Aquificia</taxon>
        <taxon>Aquificales</taxon>
        <taxon>Aquificaceae</taxon>
        <taxon>Aquifex</taxon>
    </lineage>
</organism>
<name>TATC_AQUAE</name>
<accession>O67305</accession>
<evidence type="ECO:0000255" key="1">
    <source>
        <dbReference type="HAMAP-Rule" id="MF_00902"/>
    </source>
</evidence>
<evidence type="ECO:0007829" key="2">
    <source>
        <dbReference type="PDB" id="4B4A"/>
    </source>
</evidence>
<reference key="1">
    <citation type="journal article" date="1998" name="Nature">
        <title>The complete genome of the hyperthermophilic bacterium Aquifex aeolicus.</title>
        <authorList>
            <person name="Deckert G."/>
            <person name="Warren P.V."/>
            <person name="Gaasterland T."/>
            <person name="Young W.G."/>
            <person name="Lenox A.L."/>
            <person name="Graham D.E."/>
            <person name="Overbeek R."/>
            <person name="Snead M.A."/>
            <person name="Keller M."/>
            <person name="Aujay M."/>
            <person name="Huber R."/>
            <person name="Feldman R.A."/>
            <person name="Short J.M."/>
            <person name="Olsen G.J."/>
            <person name="Swanson R.V."/>
        </authorList>
    </citation>
    <scope>NUCLEOTIDE SEQUENCE [LARGE SCALE GENOMIC DNA]</scope>
    <source>
        <strain>VF5</strain>
    </source>
</reference>
<gene>
    <name evidence="1" type="primary">tatC</name>
    <name type="ordered locus">aq_1267</name>
</gene>
<feature type="chain" id="PRO_0000098093" description="Sec-independent protein translocase protein TatC">
    <location>
        <begin position="1"/>
        <end position="240"/>
    </location>
</feature>
<feature type="transmembrane region" description="Helical" evidence="1">
    <location>
        <begin position="15"/>
        <end position="35"/>
    </location>
</feature>
<feature type="transmembrane region" description="Helical" evidence="1">
    <location>
        <begin position="61"/>
        <end position="81"/>
    </location>
</feature>
<feature type="transmembrane region" description="Helical" evidence="1">
    <location>
        <begin position="103"/>
        <end position="123"/>
    </location>
</feature>
<feature type="transmembrane region" description="Helical" evidence="1">
    <location>
        <begin position="152"/>
        <end position="172"/>
    </location>
</feature>
<feature type="transmembrane region" description="Helical" evidence="1">
    <location>
        <begin position="191"/>
        <end position="211"/>
    </location>
</feature>
<feature type="transmembrane region" description="Helical" evidence="1">
    <location>
        <begin position="212"/>
        <end position="232"/>
    </location>
</feature>
<feature type="helix" evidence="2">
    <location>
        <begin position="6"/>
        <end position="30"/>
    </location>
</feature>
<feature type="helix" evidence="2">
    <location>
        <begin position="32"/>
        <end position="46"/>
    </location>
</feature>
<feature type="strand" evidence="2">
    <location>
        <begin position="56"/>
        <end position="58"/>
    </location>
</feature>
<feature type="helix" evidence="2">
    <location>
        <begin position="60"/>
        <end position="88"/>
    </location>
</feature>
<feature type="turn" evidence="2">
    <location>
        <begin position="89"/>
        <end position="92"/>
    </location>
</feature>
<feature type="turn" evidence="2">
    <location>
        <begin position="97"/>
        <end position="100"/>
    </location>
</feature>
<feature type="helix" evidence="2">
    <location>
        <begin position="101"/>
        <end position="120"/>
    </location>
</feature>
<feature type="helix" evidence="2">
    <location>
        <begin position="122"/>
        <end position="128"/>
    </location>
</feature>
<feature type="turn" evidence="2">
    <location>
        <begin position="129"/>
        <end position="131"/>
    </location>
</feature>
<feature type="strand" evidence="2">
    <location>
        <begin position="133"/>
        <end position="135"/>
    </location>
</feature>
<feature type="strand" evidence="2">
    <location>
        <begin position="138"/>
        <end position="141"/>
    </location>
</feature>
<feature type="helix" evidence="2">
    <location>
        <begin position="146"/>
        <end position="163"/>
    </location>
</feature>
<feature type="helix" evidence="2">
    <location>
        <begin position="166"/>
        <end position="175"/>
    </location>
</feature>
<feature type="helix" evidence="2">
    <location>
        <begin position="181"/>
        <end position="202"/>
    </location>
</feature>
<feature type="helix" evidence="2">
    <location>
        <begin position="206"/>
        <end position="225"/>
    </location>
</feature>
<keyword id="KW-0002">3D-structure</keyword>
<keyword id="KW-0997">Cell inner membrane</keyword>
<keyword id="KW-1003">Cell membrane</keyword>
<keyword id="KW-0472">Membrane</keyword>
<keyword id="KW-0653">Protein transport</keyword>
<keyword id="KW-1185">Reference proteome</keyword>
<keyword id="KW-0811">Translocation</keyword>
<keyword id="KW-0812">Transmembrane</keyword>
<keyword id="KW-1133">Transmembrane helix</keyword>
<keyword id="KW-0813">Transport</keyword>
<dbReference type="EMBL" id="AE000657">
    <property type="protein sequence ID" value="AAC07267.1"/>
    <property type="molecule type" value="Genomic_DNA"/>
</dbReference>
<dbReference type="PIR" id="F70409">
    <property type="entry name" value="F70409"/>
</dbReference>
<dbReference type="RefSeq" id="NP_213869.1">
    <property type="nucleotide sequence ID" value="NC_000918.1"/>
</dbReference>
<dbReference type="RefSeq" id="WP_010880807.1">
    <property type="nucleotide sequence ID" value="NC_000918.1"/>
</dbReference>
<dbReference type="PDB" id="4B4A">
    <property type="method" value="X-ray"/>
    <property type="resolution" value="3.50 A"/>
    <property type="chains" value="A=1-240"/>
</dbReference>
<dbReference type="PDB" id="4HTS">
    <property type="method" value="X-ray"/>
    <property type="resolution" value="4.00 A"/>
    <property type="chains" value="A=1-232"/>
</dbReference>
<dbReference type="PDB" id="4HTT">
    <property type="method" value="X-ray"/>
    <property type="resolution" value="6.80 A"/>
    <property type="chains" value="A/B=1-235"/>
</dbReference>
<dbReference type="PDBsum" id="4B4A"/>
<dbReference type="PDBsum" id="4HTS"/>
<dbReference type="PDBsum" id="4HTT"/>
<dbReference type="SMR" id="O67305"/>
<dbReference type="FunCoup" id="O67305">
    <property type="interactions" value="396"/>
</dbReference>
<dbReference type="STRING" id="224324.aq_1267"/>
<dbReference type="EnsemblBacteria" id="AAC07267">
    <property type="protein sequence ID" value="AAC07267"/>
    <property type="gene ID" value="aq_1267"/>
</dbReference>
<dbReference type="KEGG" id="aae:aq_1267"/>
<dbReference type="PATRIC" id="fig|224324.8.peg.988"/>
<dbReference type="eggNOG" id="COG0805">
    <property type="taxonomic scope" value="Bacteria"/>
</dbReference>
<dbReference type="HOGENOM" id="CLU_031942_3_3_0"/>
<dbReference type="InParanoid" id="O67305"/>
<dbReference type="OrthoDB" id="9777044at2"/>
<dbReference type="EvolutionaryTrace" id="O67305"/>
<dbReference type="Proteomes" id="UP000000798">
    <property type="component" value="Chromosome"/>
</dbReference>
<dbReference type="GO" id="GO:0033281">
    <property type="term" value="C:TAT protein transport complex"/>
    <property type="evidence" value="ECO:0000318"/>
    <property type="project" value="GO_Central"/>
</dbReference>
<dbReference type="GO" id="GO:0009977">
    <property type="term" value="F:proton motive force dependent protein transmembrane transporter activity"/>
    <property type="evidence" value="ECO:0000318"/>
    <property type="project" value="GO_Central"/>
</dbReference>
<dbReference type="GO" id="GO:0065002">
    <property type="term" value="P:intracellular protein transmembrane transport"/>
    <property type="evidence" value="ECO:0000318"/>
    <property type="project" value="GO_Central"/>
</dbReference>
<dbReference type="GO" id="GO:0043953">
    <property type="term" value="P:protein transport by the Tat complex"/>
    <property type="evidence" value="ECO:0000318"/>
    <property type="project" value="GO_Central"/>
</dbReference>
<dbReference type="HAMAP" id="MF_00902">
    <property type="entry name" value="TatC"/>
    <property type="match status" value="1"/>
</dbReference>
<dbReference type="InterPro" id="IPR019820">
    <property type="entry name" value="Sec-indep_translocase_CS"/>
</dbReference>
<dbReference type="InterPro" id="IPR002033">
    <property type="entry name" value="TatC"/>
</dbReference>
<dbReference type="NCBIfam" id="TIGR00945">
    <property type="entry name" value="tatC"/>
    <property type="match status" value="1"/>
</dbReference>
<dbReference type="PANTHER" id="PTHR30371">
    <property type="entry name" value="SEC-INDEPENDENT PROTEIN TRANSLOCASE PROTEIN TATC"/>
    <property type="match status" value="1"/>
</dbReference>
<dbReference type="PANTHER" id="PTHR30371:SF0">
    <property type="entry name" value="SEC-INDEPENDENT PROTEIN TRANSLOCASE PROTEIN TATC, CHLOROPLASTIC-RELATED"/>
    <property type="match status" value="1"/>
</dbReference>
<dbReference type="Pfam" id="PF00902">
    <property type="entry name" value="TatC"/>
    <property type="match status" value="1"/>
</dbReference>
<dbReference type="PRINTS" id="PR01840">
    <property type="entry name" value="TATCFAMILY"/>
</dbReference>
<dbReference type="PROSITE" id="PS01218">
    <property type="entry name" value="TATC"/>
    <property type="match status" value="1"/>
</dbReference>